<organism>
    <name type="scientific">Mus musculus</name>
    <name type="common">Mouse</name>
    <dbReference type="NCBI Taxonomy" id="10090"/>
    <lineage>
        <taxon>Eukaryota</taxon>
        <taxon>Metazoa</taxon>
        <taxon>Chordata</taxon>
        <taxon>Craniata</taxon>
        <taxon>Vertebrata</taxon>
        <taxon>Euteleostomi</taxon>
        <taxon>Mammalia</taxon>
        <taxon>Eutheria</taxon>
        <taxon>Euarchontoglires</taxon>
        <taxon>Glires</taxon>
        <taxon>Rodentia</taxon>
        <taxon>Myomorpha</taxon>
        <taxon>Muroidea</taxon>
        <taxon>Muridae</taxon>
        <taxon>Murinae</taxon>
        <taxon>Mus</taxon>
        <taxon>Mus</taxon>
    </lineage>
</organism>
<keyword id="KW-0025">Alternative splicing</keyword>
<keyword id="KW-0966">Cell projection</keyword>
<keyword id="KW-1185">Reference proteome</keyword>
<keyword id="KW-0677">Repeat</keyword>
<name>CALL4_MOUSE</name>
<evidence type="ECO:0000250" key="1">
    <source>
        <dbReference type="UniProtKB" id="Q96GE6"/>
    </source>
</evidence>
<evidence type="ECO:0000255" key="2">
    <source>
        <dbReference type="PROSITE-ProRule" id="PRU00448"/>
    </source>
</evidence>
<evidence type="ECO:0000269" key="3">
    <source>
    </source>
</evidence>
<evidence type="ECO:0000303" key="4">
    <source>
    </source>
</evidence>
<evidence type="ECO:0000303" key="5">
    <source>
    </source>
</evidence>
<evidence type="ECO:0000305" key="6"/>
<gene>
    <name type="primary">Calml4</name>
</gene>
<sequence length="153" mass="17671">MAKFLSQDQINEYKECFSLYDKQQRGKIKATDLLVSMRCLGASPTPGEVQRHLQTHGIDKNGELDFSTFLTIMHMQIKQEDPKKEILLAMLMADKEKKGYIMASELRSKLMKLGEKLTHKEVDDLFKEAGIEPNGQVKYDTFIQRITIPVRDY</sequence>
<comment type="function">
    <text evidence="1">As part of the intermicrovillar adhesion complex/IMAC plays a role in epithelial brush border differentiation, controlling microvilli organization and length. Acts as a light chain for MYO7B and is required for efficient targeting of the IMAC to the tips of border brush microvilli.</text>
</comment>
<comment type="subunit">
    <text evidence="1">Interacts with MYO7B; the interaction mediates the association of CALML4 with the IMAC/intermicrovillar adhesion complex. Interacts with MYO7A.</text>
</comment>
<comment type="subcellular location">
    <molecule>Isoform 1</molecule>
    <subcellularLocation>
        <location evidence="3">Cell projection</location>
        <location evidence="3">Microvillus</location>
    </subcellularLocation>
    <text evidence="3">Enriched at the distal tips of enterocyte microvilli.</text>
</comment>
<comment type="alternative products">
    <event type="alternative splicing"/>
    <isoform>
        <id>Q91WQ9-1</id>
        <name>1</name>
        <name evidence="5">Short</name>
        <sequence type="displayed"/>
    </isoform>
    <isoform>
        <id>Q91WQ9-2</id>
        <name>2</name>
        <sequence type="described" ref="VSP_030438"/>
    </isoform>
    <isoform>
        <id>Q91WQ9-3</id>
        <name>3</name>
        <sequence type="described" ref="VSP_030437"/>
    </isoform>
</comment>
<comment type="tissue specificity">
    <text evidence="3">Expressed in the small intestine, in both mature enterocytes on the villus surface and immature cells that reside in the crypt stem-cell niche.</text>
</comment>
<comment type="similarity">
    <text evidence="6">Belongs to the calmodulin family.</text>
</comment>
<proteinExistence type="evidence at protein level"/>
<protein>
    <recommendedName>
        <fullName>Calmodulin-like protein 4</fullName>
    </recommendedName>
    <alternativeName>
        <fullName>Calmodulin-related</fullName>
        <shortName>CALM-Rel</shortName>
    </alternativeName>
</protein>
<accession>Q91WQ9</accession>
<accession>Q3UJ19</accession>
<accession>Q8C1Q0</accession>
<accession>Q8R1P1</accession>
<accession>Q8VD39</accession>
<feature type="chain" id="PRO_0000314934" description="Calmodulin-like protein 4">
    <location>
        <begin position="1"/>
        <end position="153"/>
    </location>
</feature>
<feature type="domain" description="EF-hand 1" evidence="2">
    <location>
        <begin position="8"/>
        <end position="43"/>
    </location>
</feature>
<feature type="domain" description="EF-hand 2" evidence="2">
    <location>
        <begin position="44"/>
        <end position="79"/>
    </location>
</feature>
<feature type="domain" description="EF-hand 3" evidence="2">
    <location>
        <begin position="81"/>
        <end position="116"/>
    </location>
</feature>
<feature type="domain" description="EF-hand 4" evidence="6">
    <location>
        <begin position="117"/>
        <end position="152"/>
    </location>
</feature>
<feature type="splice variant" id="VSP_030437" description="In isoform 3." evidence="4">
    <location>
        <begin position="1"/>
        <end position="72"/>
    </location>
</feature>
<feature type="splice variant" id="VSP_030438" description="In isoform 2." evidence="4">
    <original>VDDLFKEAGIEPNGQVKYDTFIQRITIPVRDY</original>
    <variation>GTSLVGSERGNRGEGSVL</variation>
    <location>
        <begin position="122"/>
        <end position="153"/>
    </location>
</feature>
<feature type="sequence conflict" description="In Ref. 3; AAH23475." evidence="6" ref="3">
    <original>S</original>
    <variation>P</variation>
    <location>
        <position position="67"/>
    </location>
</feature>
<dbReference type="EMBL" id="AY061807">
    <property type="protein sequence ID" value="AAL38053.1"/>
    <property type="molecule type" value="mRNA"/>
</dbReference>
<dbReference type="EMBL" id="AK008039">
    <property type="protein sequence ID" value="BAC25195.1"/>
    <property type="molecule type" value="mRNA"/>
</dbReference>
<dbReference type="EMBL" id="AK146656">
    <property type="protein sequence ID" value="BAE27336.1"/>
    <property type="molecule type" value="mRNA"/>
</dbReference>
<dbReference type="EMBL" id="BC013541">
    <property type="protein sequence ID" value="AAH13541.2"/>
    <property type="molecule type" value="mRNA"/>
</dbReference>
<dbReference type="EMBL" id="BC023475">
    <property type="protein sequence ID" value="AAH23475.1"/>
    <property type="molecule type" value="mRNA"/>
</dbReference>
<dbReference type="CCDS" id="CCDS40664.1">
    <molecule id="Q91WQ9-1"/>
</dbReference>
<dbReference type="RefSeq" id="NP_612177.1">
    <molecule id="Q91WQ9-1"/>
    <property type="nucleotide sequence ID" value="NM_138304.2"/>
</dbReference>
<dbReference type="RefSeq" id="XP_006511595.1">
    <molecule id="Q91WQ9-3"/>
    <property type="nucleotide sequence ID" value="XM_006511532.2"/>
</dbReference>
<dbReference type="SMR" id="Q91WQ9"/>
<dbReference type="FunCoup" id="Q91WQ9">
    <property type="interactions" value="2044"/>
</dbReference>
<dbReference type="STRING" id="10090.ENSMUSP00000034777"/>
<dbReference type="GlyGen" id="Q91WQ9">
    <property type="glycosylation" value="1 site"/>
</dbReference>
<dbReference type="iPTMnet" id="Q91WQ9"/>
<dbReference type="PhosphoSitePlus" id="Q91WQ9"/>
<dbReference type="jPOST" id="Q91WQ9"/>
<dbReference type="PaxDb" id="10090-ENSMUSP00000034777"/>
<dbReference type="PeptideAtlas" id="Q91WQ9"/>
<dbReference type="ProteomicsDB" id="265506">
    <molecule id="Q91WQ9-1"/>
</dbReference>
<dbReference type="ProteomicsDB" id="265507">
    <molecule id="Q91WQ9-2"/>
</dbReference>
<dbReference type="ProteomicsDB" id="265508">
    <molecule id="Q91WQ9-3"/>
</dbReference>
<dbReference type="Pumba" id="Q91WQ9"/>
<dbReference type="Antibodypedia" id="42938">
    <property type="antibodies" value="127 antibodies from 20 providers"/>
</dbReference>
<dbReference type="DNASU" id="75600"/>
<dbReference type="Ensembl" id="ENSMUST00000034777.14">
    <molecule id="Q91WQ9-1"/>
    <property type="protein sequence ID" value="ENSMUSP00000034777.7"/>
    <property type="gene ID" value="ENSMUSG00000032246.15"/>
</dbReference>
<dbReference type="Ensembl" id="ENSMUST00000213643.2">
    <molecule id="Q91WQ9-3"/>
    <property type="protein sequence ID" value="ENSMUSP00000150355.2"/>
    <property type="gene ID" value="ENSMUSG00000032246.15"/>
</dbReference>
<dbReference type="Ensembl" id="ENSMUST00000215870.2">
    <molecule id="Q91WQ9-2"/>
    <property type="protein sequence ID" value="ENSMUSP00000148892.2"/>
    <property type="gene ID" value="ENSMUSG00000032246.15"/>
</dbReference>
<dbReference type="GeneID" id="75600"/>
<dbReference type="KEGG" id="mmu:75600"/>
<dbReference type="UCSC" id="uc009qao.1">
    <molecule id="Q91WQ9-2"/>
    <property type="organism name" value="mouse"/>
</dbReference>
<dbReference type="UCSC" id="uc009qap.1">
    <molecule id="Q91WQ9-1"/>
    <property type="organism name" value="mouse"/>
</dbReference>
<dbReference type="AGR" id="MGI:1922850"/>
<dbReference type="CTD" id="91860"/>
<dbReference type="MGI" id="MGI:1922850">
    <property type="gene designation" value="Calml4"/>
</dbReference>
<dbReference type="VEuPathDB" id="HostDB:ENSMUSG00000032246"/>
<dbReference type="eggNOG" id="KOG0027">
    <property type="taxonomic scope" value="Eukaryota"/>
</dbReference>
<dbReference type="GeneTree" id="ENSGT00940000157859"/>
<dbReference type="HOGENOM" id="CLU_061288_2_0_1"/>
<dbReference type="InParanoid" id="Q91WQ9"/>
<dbReference type="OMA" id="NYEAFTQ"/>
<dbReference type="OrthoDB" id="435273at2759"/>
<dbReference type="PhylomeDB" id="Q91WQ9"/>
<dbReference type="TreeFam" id="TF300912"/>
<dbReference type="BioGRID-ORCS" id="75600">
    <property type="hits" value="1 hit in 73 CRISPR screens"/>
</dbReference>
<dbReference type="ChiTaRS" id="Calml4">
    <property type="organism name" value="mouse"/>
</dbReference>
<dbReference type="PRO" id="PR:Q91WQ9"/>
<dbReference type="Proteomes" id="UP000000589">
    <property type="component" value="Chromosome 9"/>
</dbReference>
<dbReference type="RNAct" id="Q91WQ9">
    <property type="molecule type" value="protein"/>
</dbReference>
<dbReference type="Bgee" id="ENSMUSG00000032246">
    <property type="expression patterns" value="Expressed in choroid plexus epithelium and 192 other cell types or tissues"/>
</dbReference>
<dbReference type="ExpressionAtlas" id="Q91WQ9">
    <property type="expression patterns" value="baseline and differential"/>
</dbReference>
<dbReference type="GO" id="GO:0005902">
    <property type="term" value="C:microvillus"/>
    <property type="evidence" value="ECO:0000250"/>
    <property type="project" value="UniProtKB"/>
</dbReference>
<dbReference type="GO" id="GO:0005509">
    <property type="term" value="F:calcium ion binding"/>
    <property type="evidence" value="ECO:0007669"/>
    <property type="project" value="InterPro"/>
</dbReference>
<dbReference type="GO" id="GO:0032028">
    <property type="term" value="F:myosin head/neck binding"/>
    <property type="evidence" value="ECO:0007669"/>
    <property type="project" value="Ensembl"/>
</dbReference>
<dbReference type="GO" id="GO:1904970">
    <property type="term" value="P:brush border assembly"/>
    <property type="evidence" value="ECO:0000250"/>
    <property type="project" value="UniProtKB"/>
</dbReference>
<dbReference type="CDD" id="cd00051">
    <property type="entry name" value="EFh"/>
    <property type="match status" value="1"/>
</dbReference>
<dbReference type="FunFam" id="1.10.238.10:FF:000191">
    <property type="entry name" value="Calmodulin like 4"/>
    <property type="match status" value="1"/>
</dbReference>
<dbReference type="Gene3D" id="1.10.238.10">
    <property type="entry name" value="EF-hand"/>
    <property type="match status" value="1"/>
</dbReference>
<dbReference type="InterPro" id="IPR050230">
    <property type="entry name" value="CALM/Myosin/TropC-like"/>
</dbReference>
<dbReference type="InterPro" id="IPR011992">
    <property type="entry name" value="EF-hand-dom_pair"/>
</dbReference>
<dbReference type="InterPro" id="IPR002048">
    <property type="entry name" value="EF_hand_dom"/>
</dbReference>
<dbReference type="PANTHER" id="PTHR23048:SF45">
    <property type="entry name" value="CALMODULIN LIKE 4"/>
    <property type="match status" value="1"/>
</dbReference>
<dbReference type="PANTHER" id="PTHR23048">
    <property type="entry name" value="MYOSIN LIGHT CHAIN 1, 3"/>
    <property type="match status" value="1"/>
</dbReference>
<dbReference type="Pfam" id="PF13499">
    <property type="entry name" value="EF-hand_7"/>
    <property type="match status" value="1"/>
</dbReference>
<dbReference type="SMART" id="SM00054">
    <property type="entry name" value="EFh"/>
    <property type="match status" value="3"/>
</dbReference>
<dbReference type="SUPFAM" id="SSF47473">
    <property type="entry name" value="EF-hand"/>
    <property type="match status" value="1"/>
</dbReference>
<dbReference type="PROSITE" id="PS50222">
    <property type="entry name" value="EF_HAND_2"/>
    <property type="match status" value="3"/>
</dbReference>
<reference key="1">
    <citation type="journal article" date="2002" name="J. Biol. Chem.">
        <title>Altered levels of growth-related and novel gene transcripts in reproductive and other tissues of female mice overexpressing spermidine/spermine N1-acetyltransferase (SSAT).</title>
        <authorList>
            <person name="Min S.H."/>
            <person name="Simmen R.C.M."/>
            <person name="Alhonen L."/>
            <person name="Halmekytoe M."/>
            <person name="Porter C.W."/>
            <person name="Jaenne J."/>
            <person name="Simmen F.A."/>
        </authorList>
    </citation>
    <scope>NUCLEOTIDE SEQUENCE [MRNA] (ISOFORM 1)</scope>
    <source>
        <strain>BALB/c X DBA/2</strain>
        <tissue>Liver</tissue>
    </source>
</reference>
<reference key="2">
    <citation type="journal article" date="2005" name="Science">
        <title>The transcriptional landscape of the mammalian genome.</title>
        <authorList>
            <person name="Carninci P."/>
            <person name="Kasukawa T."/>
            <person name="Katayama S."/>
            <person name="Gough J."/>
            <person name="Frith M.C."/>
            <person name="Maeda N."/>
            <person name="Oyama R."/>
            <person name="Ravasi T."/>
            <person name="Lenhard B."/>
            <person name="Wells C."/>
            <person name="Kodzius R."/>
            <person name="Shimokawa K."/>
            <person name="Bajic V.B."/>
            <person name="Brenner S.E."/>
            <person name="Batalov S."/>
            <person name="Forrest A.R."/>
            <person name="Zavolan M."/>
            <person name="Davis M.J."/>
            <person name="Wilming L.G."/>
            <person name="Aidinis V."/>
            <person name="Allen J.E."/>
            <person name="Ambesi-Impiombato A."/>
            <person name="Apweiler R."/>
            <person name="Aturaliya R.N."/>
            <person name="Bailey T.L."/>
            <person name="Bansal M."/>
            <person name="Baxter L."/>
            <person name="Beisel K.W."/>
            <person name="Bersano T."/>
            <person name="Bono H."/>
            <person name="Chalk A.M."/>
            <person name="Chiu K.P."/>
            <person name="Choudhary V."/>
            <person name="Christoffels A."/>
            <person name="Clutterbuck D.R."/>
            <person name="Crowe M.L."/>
            <person name="Dalla E."/>
            <person name="Dalrymple B.P."/>
            <person name="de Bono B."/>
            <person name="Della Gatta G."/>
            <person name="di Bernardo D."/>
            <person name="Down T."/>
            <person name="Engstrom P."/>
            <person name="Fagiolini M."/>
            <person name="Faulkner G."/>
            <person name="Fletcher C.F."/>
            <person name="Fukushima T."/>
            <person name="Furuno M."/>
            <person name="Futaki S."/>
            <person name="Gariboldi M."/>
            <person name="Georgii-Hemming P."/>
            <person name="Gingeras T.R."/>
            <person name="Gojobori T."/>
            <person name="Green R.E."/>
            <person name="Gustincich S."/>
            <person name="Harbers M."/>
            <person name="Hayashi Y."/>
            <person name="Hensch T.K."/>
            <person name="Hirokawa N."/>
            <person name="Hill D."/>
            <person name="Huminiecki L."/>
            <person name="Iacono M."/>
            <person name="Ikeo K."/>
            <person name="Iwama A."/>
            <person name="Ishikawa T."/>
            <person name="Jakt M."/>
            <person name="Kanapin A."/>
            <person name="Katoh M."/>
            <person name="Kawasawa Y."/>
            <person name="Kelso J."/>
            <person name="Kitamura H."/>
            <person name="Kitano H."/>
            <person name="Kollias G."/>
            <person name="Krishnan S.P."/>
            <person name="Kruger A."/>
            <person name="Kummerfeld S.K."/>
            <person name="Kurochkin I.V."/>
            <person name="Lareau L.F."/>
            <person name="Lazarevic D."/>
            <person name="Lipovich L."/>
            <person name="Liu J."/>
            <person name="Liuni S."/>
            <person name="McWilliam S."/>
            <person name="Madan Babu M."/>
            <person name="Madera M."/>
            <person name="Marchionni L."/>
            <person name="Matsuda H."/>
            <person name="Matsuzawa S."/>
            <person name="Miki H."/>
            <person name="Mignone F."/>
            <person name="Miyake S."/>
            <person name="Morris K."/>
            <person name="Mottagui-Tabar S."/>
            <person name="Mulder N."/>
            <person name="Nakano N."/>
            <person name="Nakauchi H."/>
            <person name="Ng P."/>
            <person name="Nilsson R."/>
            <person name="Nishiguchi S."/>
            <person name="Nishikawa S."/>
            <person name="Nori F."/>
            <person name="Ohara O."/>
            <person name="Okazaki Y."/>
            <person name="Orlando V."/>
            <person name="Pang K.C."/>
            <person name="Pavan W.J."/>
            <person name="Pavesi G."/>
            <person name="Pesole G."/>
            <person name="Petrovsky N."/>
            <person name="Piazza S."/>
            <person name="Reed J."/>
            <person name="Reid J.F."/>
            <person name="Ring B.Z."/>
            <person name="Ringwald M."/>
            <person name="Rost B."/>
            <person name="Ruan Y."/>
            <person name="Salzberg S.L."/>
            <person name="Sandelin A."/>
            <person name="Schneider C."/>
            <person name="Schoenbach C."/>
            <person name="Sekiguchi K."/>
            <person name="Semple C.A."/>
            <person name="Seno S."/>
            <person name="Sessa L."/>
            <person name="Sheng Y."/>
            <person name="Shibata Y."/>
            <person name="Shimada H."/>
            <person name="Shimada K."/>
            <person name="Silva D."/>
            <person name="Sinclair B."/>
            <person name="Sperling S."/>
            <person name="Stupka E."/>
            <person name="Sugiura K."/>
            <person name="Sultana R."/>
            <person name="Takenaka Y."/>
            <person name="Taki K."/>
            <person name="Tammoja K."/>
            <person name="Tan S.L."/>
            <person name="Tang S."/>
            <person name="Taylor M.S."/>
            <person name="Tegner J."/>
            <person name="Teichmann S.A."/>
            <person name="Ueda H.R."/>
            <person name="van Nimwegen E."/>
            <person name="Verardo R."/>
            <person name="Wei C.L."/>
            <person name="Yagi K."/>
            <person name="Yamanishi H."/>
            <person name="Zabarovsky E."/>
            <person name="Zhu S."/>
            <person name="Zimmer A."/>
            <person name="Hide W."/>
            <person name="Bult C."/>
            <person name="Grimmond S.M."/>
            <person name="Teasdale R.D."/>
            <person name="Liu E.T."/>
            <person name="Brusic V."/>
            <person name="Quackenbush J."/>
            <person name="Wahlestedt C."/>
            <person name="Mattick J.S."/>
            <person name="Hume D.A."/>
            <person name="Kai C."/>
            <person name="Sasaki D."/>
            <person name="Tomaru Y."/>
            <person name="Fukuda S."/>
            <person name="Kanamori-Katayama M."/>
            <person name="Suzuki M."/>
            <person name="Aoki J."/>
            <person name="Arakawa T."/>
            <person name="Iida J."/>
            <person name="Imamura K."/>
            <person name="Itoh M."/>
            <person name="Kato T."/>
            <person name="Kawaji H."/>
            <person name="Kawagashira N."/>
            <person name="Kawashima T."/>
            <person name="Kojima M."/>
            <person name="Kondo S."/>
            <person name="Konno H."/>
            <person name="Nakano K."/>
            <person name="Ninomiya N."/>
            <person name="Nishio T."/>
            <person name="Okada M."/>
            <person name="Plessy C."/>
            <person name="Shibata K."/>
            <person name="Shiraki T."/>
            <person name="Suzuki S."/>
            <person name="Tagami M."/>
            <person name="Waki K."/>
            <person name="Watahiki A."/>
            <person name="Okamura-Oho Y."/>
            <person name="Suzuki H."/>
            <person name="Kawai J."/>
            <person name="Hayashizaki Y."/>
        </authorList>
    </citation>
    <scope>NUCLEOTIDE SEQUENCE [LARGE SCALE MRNA] (ISOFORMS 2 AND 3)</scope>
    <source>
        <strain>C57BL/6J</strain>
        <tissue>Kidney</tissue>
        <tissue>Small intestine</tissue>
    </source>
</reference>
<reference key="3">
    <citation type="journal article" date="2004" name="Genome Res.">
        <title>The status, quality, and expansion of the NIH full-length cDNA project: the Mammalian Gene Collection (MGC).</title>
        <authorList>
            <consortium name="The MGC Project Team"/>
        </authorList>
    </citation>
    <scope>NUCLEOTIDE SEQUENCE [LARGE SCALE MRNA] (ISOFORM 1)</scope>
    <source>
        <strain>FVB/N</strain>
        <tissue>Kidney</tissue>
    </source>
</reference>
<reference key="4">
    <citation type="journal article" date="2010" name="Cell">
        <title>A tissue-specific atlas of mouse protein phosphorylation and expression.</title>
        <authorList>
            <person name="Huttlin E.L."/>
            <person name="Jedrychowski M.P."/>
            <person name="Elias J.E."/>
            <person name="Goswami T."/>
            <person name="Rad R."/>
            <person name="Beausoleil S.A."/>
            <person name="Villen J."/>
            <person name="Haas W."/>
            <person name="Sowa M.E."/>
            <person name="Gygi S.P."/>
        </authorList>
    </citation>
    <scope>IDENTIFICATION BY MASS SPECTROMETRY [LARGE SCALE ANALYSIS]</scope>
    <source>
        <tissue>Kidney</tissue>
    </source>
</reference>
<reference key="5">
    <citation type="journal article" date="2020" name="J. Biol. Chem.">
        <title>The small EF-hand protein CALML4 functions as a critical myosin light chain within the intermicrovillar adhesion complex.</title>
        <authorList>
            <person name="Choi M.S."/>
            <person name="Graves M.J."/>
            <person name="Matoo S."/>
            <person name="Storad Z.A."/>
            <person name="El Sheikh Idris R.A."/>
            <person name="Weck M.L."/>
            <person name="Smith Z.B."/>
            <person name="Tyska M.J."/>
            <person name="Crawley S.W."/>
        </authorList>
    </citation>
    <scope>TISSUE SPECIFICITY</scope>
    <scope>SUBCELLULAR LOCATION</scope>
</reference>